<organism>
    <name type="scientific">Desulforapulum autotrophicum (strain ATCC 43914 / DSM 3382 / VKM B-1955 / HRM2)</name>
    <name type="common">Desulfobacterium autotrophicum</name>
    <dbReference type="NCBI Taxonomy" id="177437"/>
    <lineage>
        <taxon>Bacteria</taxon>
        <taxon>Pseudomonadati</taxon>
        <taxon>Thermodesulfobacteriota</taxon>
        <taxon>Desulfobacteria</taxon>
        <taxon>Desulfobacterales</taxon>
        <taxon>Desulfobacteraceae</taxon>
        <taxon>Desulforapulum</taxon>
    </lineage>
</organism>
<proteinExistence type="inferred from homology"/>
<protein>
    <recommendedName>
        <fullName evidence="1">Large ribosomal subunit protein bL31</fullName>
    </recommendedName>
    <alternativeName>
        <fullName evidence="2">50S ribosomal protein L31</fullName>
    </alternativeName>
</protein>
<gene>
    <name evidence="1" type="primary">rpmE</name>
    <name type="ordered locus">HRM2_17070</name>
</gene>
<accession>C0QB14</accession>
<sequence length="75" mass="8370">MKKDLHPEYKRTMASCACGNTLEVGSTRDEIKVEICSKCHPFFTGKQKLVDTAGRIDRFKKKYAGFDAAAAAKKK</sequence>
<evidence type="ECO:0000255" key="1">
    <source>
        <dbReference type="HAMAP-Rule" id="MF_00501"/>
    </source>
</evidence>
<evidence type="ECO:0000305" key="2"/>
<keyword id="KW-0479">Metal-binding</keyword>
<keyword id="KW-1185">Reference proteome</keyword>
<keyword id="KW-0687">Ribonucleoprotein</keyword>
<keyword id="KW-0689">Ribosomal protein</keyword>
<keyword id="KW-0694">RNA-binding</keyword>
<keyword id="KW-0699">rRNA-binding</keyword>
<keyword id="KW-0862">Zinc</keyword>
<dbReference type="EMBL" id="CP001087">
    <property type="protein sequence ID" value="ACN14813.1"/>
    <property type="molecule type" value="Genomic_DNA"/>
</dbReference>
<dbReference type="RefSeq" id="WP_015903600.1">
    <property type="nucleotide sequence ID" value="NC_012108.1"/>
</dbReference>
<dbReference type="SMR" id="C0QB14"/>
<dbReference type="STRING" id="177437.HRM2_17070"/>
<dbReference type="KEGG" id="dat:HRM2_17070"/>
<dbReference type="eggNOG" id="COG0254">
    <property type="taxonomic scope" value="Bacteria"/>
</dbReference>
<dbReference type="HOGENOM" id="CLU_114306_4_3_7"/>
<dbReference type="OrthoDB" id="9803251at2"/>
<dbReference type="Proteomes" id="UP000000442">
    <property type="component" value="Chromosome"/>
</dbReference>
<dbReference type="GO" id="GO:1990904">
    <property type="term" value="C:ribonucleoprotein complex"/>
    <property type="evidence" value="ECO:0007669"/>
    <property type="project" value="UniProtKB-KW"/>
</dbReference>
<dbReference type="GO" id="GO:0005840">
    <property type="term" value="C:ribosome"/>
    <property type="evidence" value="ECO:0007669"/>
    <property type="project" value="UniProtKB-KW"/>
</dbReference>
<dbReference type="GO" id="GO:0046872">
    <property type="term" value="F:metal ion binding"/>
    <property type="evidence" value="ECO:0007669"/>
    <property type="project" value="UniProtKB-KW"/>
</dbReference>
<dbReference type="GO" id="GO:0019843">
    <property type="term" value="F:rRNA binding"/>
    <property type="evidence" value="ECO:0007669"/>
    <property type="project" value="UniProtKB-KW"/>
</dbReference>
<dbReference type="GO" id="GO:0003735">
    <property type="term" value="F:structural constituent of ribosome"/>
    <property type="evidence" value="ECO:0007669"/>
    <property type="project" value="InterPro"/>
</dbReference>
<dbReference type="GO" id="GO:0006412">
    <property type="term" value="P:translation"/>
    <property type="evidence" value="ECO:0007669"/>
    <property type="project" value="UniProtKB-UniRule"/>
</dbReference>
<dbReference type="Gene3D" id="4.10.830.30">
    <property type="entry name" value="Ribosomal protein L31"/>
    <property type="match status" value="1"/>
</dbReference>
<dbReference type="HAMAP" id="MF_00501">
    <property type="entry name" value="Ribosomal_bL31_1"/>
    <property type="match status" value="1"/>
</dbReference>
<dbReference type="InterPro" id="IPR034704">
    <property type="entry name" value="Ribosomal_bL28/bL31-like_sf"/>
</dbReference>
<dbReference type="InterPro" id="IPR002150">
    <property type="entry name" value="Ribosomal_bL31"/>
</dbReference>
<dbReference type="InterPro" id="IPR027491">
    <property type="entry name" value="Ribosomal_bL31_A"/>
</dbReference>
<dbReference type="InterPro" id="IPR042105">
    <property type="entry name" value="Ribosomal_bL31_sf"/>
</dbReference>
<dbReference type="NCBIfam" id="TIGR00105">
    <property type="entry name" value="L31"/>
    <property type="match status" value="1"/>
</dbReference>
<dbReference type="NCBIfam" id="NF000612">
    <property type="entry name" value="PRK00019.1"/>
    <property type="match status" value="1"/>
</dbReference>
<dbReference type="NCBIfam" id="NF001809">
    <property type="entry name" value="PRK00528.1"/>
    <property type="match status" value="1"/>
</dbReference>
<dbReference type="PANTHER" id="PTHR33280">
    <property type="entry name" value="50S RIBOSOMAL PROTEIN L31, CHLOROPLASTIC"/>
    <property type="match status" value="1"/>
</dbReference>
<dbReference type="PANTHER" id="PTHR33280:SF1">
    <property type="entry name" value="LARGE RIBOSOMAL SUBUNIT PROTEIN BL31C"/>
    <property type="match status" value="1"/>
</dbReference>
<dbReference type="Pfam" id="PF01197">
    <property type="entry name" value="Ribosomal_L31"/>
    <property type="match status" value="1"/>
</dbReference>
<dbReference type="PRINTS" id="PR01249">
    <property type="entry name" value="RIBOSOMALL31"/>
</dbReference>
<dbReference type="SUPFAM" id="SSF143800">
    <property type="entry name" value="L28p-like"/>
    <property type="match status" value="1"/>
</dbReference>
<dbReference type="PROSITE" id="PS01143">
    <property type="entry name" value="RIBOSOMAL_L31"/>
    <property type="match status" value="1"/>
</dbReference>
<feature type="chain" id="PRO_1000206519" description="Large ribosomal subunit protein bL31">
    <location>
        <begin position="1"/>
        <end position="75"/>
    </location>
</feature>
<feature type="binding site" evidence="1">
    <location>
        <position position="16"/>
    </location>
    <ligand>
        <name>Zn(2+)</name>
        <dbReference type="ChEBI" id="CHEBI:29105"/>
    </ligand>
</feature>
<feature type="binding site" evidence="1">
    <location>
        <position position="18"/>
    </location>
    <ligand>
        <name>Zn(2+)</name>
        <dbReference type="ChEBI" id="CHEBI:29105"/>
    </ligand>
</feature>
<feature type="binding site" evidence="1">
    <location>
        <position position="36"/>
    </location>
    <ligand>
        <name>Zn(2+)</name>
        <dbReference type="ChEBI" id="CHEBI:29105"/>
    </ligand>
</feature>
<feature type="binding site" evidence="1">
    <location>
        <position position="39"/>
    </location>
    <ligand>
        <name>Zn(2+)</name>
        <dbReference type="ChEBI" id="CHEBI:29105"/>
    </ligand>
</feature>
<reference key="1">
    <citation type="journal article" date="2009" name="Environ. Microbiol.">
        <title>Genome sequence of Desulfobacterium autotrophicum HRM2, a marine sulfate reducer oxidizing organic carbon completely to carbon dioxide.</title>
        <authorList>
            <person name="Strittmatter A.W."/>
            <person name="Liesegang H."/>
            <person name="Rabus R."/>
            <person name="Decker I."/>
            <person name="Amann J."/>
            <person name="Andres S."/>
            <person name="Henne A."/>
            <person name="Fricke W.F."/>
            <person name="Martinez-Arias R."/>
            <person name="Bartels D."/>
            <person name="Goesmann A."/>
            <person name="Krause L."/>
            <person name="Puehler A."/>
            <person name="Klenk H.P."/>
            <person name="Richter M."/>
            <person name="Schuler M."/>
            <person name="Gloeckner F.O."/>
            <person name="Meyerdierks A."/>
            <person name="Gottschalk G."/>
            <person name="Amann R."/>
        </authorList>
    </citation>
    <scope>NUCLEOTIDE SEQUENCE [LARGE SCALE GENOMIC DNA]</scope>
    <source>
        <strain>ATCC 43914 / DSM 3382 / VKM B-1955 / HRM2</strain>
    </source>
</reference>
<name>RL31_DESAH</name>
<comment type="function">
    <text evidence="1">Binds the 23S rRNA.</text>
</comment>
<comment type="cofactor">
    <cofactor evidence="1">
        <name>Zn(2+)</name>
        <dbReference type="ChEBI" id="CHEBI:29105"/>
    </cofactor>
    <text evidence="1">Binds 1 zinc ion per subunit.</text>
</comment>
<comment type="subunit">
    <text evidence="1">Part of the 50S ribosomal subunit.</text>
</comment>
<comment type="similarity">
    <text evidence="1">Belongs to the bacterial ribosomal protein bL31 family. Type A subfamily.</text>
</comment>